<sequence>MFSRVGRLTTFGAQAVSNCPFRRDNIYQQPLKVTAPINDQLTSFAHSFSDSVRHRTTSFGNDPFLGVPMDDDEVIKELELLDLDSWHTKPRAPCPAPSDELELDQFWEGKNVTVCGRDPRLGKSTDCFELEAWRPTDSWQNGSSVGHPHGHQQQQQTCQQPPTHSSTTETMHDFSNFGDNMGSPLFQSPSKSAIDQLTGTSRIDEYGMPPQDRKLSKFEMDIEQESKAVDWEAWNHYLESDDDVFKRPEAFFKEEPMIMTSSDSLMTSSTSSPDSGISLYDPMIPPPSSHFPSFNLSSSSSASNLLRLSTPSAPMQQEHRAPVRMHHDVDLFSSGPLLCVPKQEDVFDDFIQQRDDDDEDYIPASEARRTSSRLNRKSATPTYLRRRDSERSWTPASDDYFPEEHQKFKKRGVVLKPSVDEETDRRRMLNRIAAVRYREKKRAEKKGRKMEFQEVADRNRILLQKERQLKREINSMKKELRKMGAIIQ</sequence>
<name>ATFS1_CAEEL</name>
<proteinExistence type="evidence at protein level"/>
<keyword id="KW-0025">Alternative splicing</keyword>
<keyword id="KW-0963">Cytoplasm</keyword>
<keyword id="KW-0238">DNA-binding</keyword>
<keyword id="KW-0391">Immunity</keyword>
<keyword id="KW-0399">Innate immunity</keyword>
<keyword id="KW-1017">Isopeptide bond</keyword>
<keyword id="KW-0496">Mitochondrion</keyword>
<keyword id="KW-0539">Nucleus</keyword>
<keyword id="KW-1185">Reference proteome</keyword>
<keyword id="KW-0804">Transcription</keyword>
<keyword id="KW-0805">Transcription regulation</keyword>
<keyword id="KW-0809">Transit peptide</keyword>
<keyword id="KW-0834">Unfolded protein response</keyword>
<reference evidence="15" key="1">
    <citation type="journal article" date="1998" name="Science">
        <title>Genome sequence of the nematode C. elegans: a platform for investigating biology.</title>
        <authorList>
            <consortium name="The C. elegans sequencing consortium"/>
        </authorList>
    </citation>
    <scope>NUCLEOTIDE SEQUENCE [LARGE SCALE GENOMIC DNA]</scope>
    <source>
        <strain evidence="15">Bristol N2</strain>
    </source>
</reference>
<reference evidence="10" key="2">
    <citation type="journal article" date="2012" name="Science">
        <title>Mitochondrial import efficiency of ATFS-1 regulates mitochondrial UPR activation.</title>
        <authorList>
            <person name="Nargund A.M."/>
            <person name="Pellegrino M.W."/>
            <person name="Fiorese C.J."/>
            <person name="Baker B.M."/>
            <person name="Haynes C.M."/>
        </authorList>
    </citation>
    <scope>FUNCTION</scope>
    <scope>SUBCELLULAR LOCATION</scope>
    <scope>TISSUE SPECIFICITY</scope>
    <scope>DISRUPTION PHENOTYPE</scope>
    <scope>NUCLEAR LOCALIZATION SIGNAL</scope>
    <scope>MUTAGENESIS OF 436-ARG--LYS-441</scope>
</reference>
<reference evidence="10" key="3">
    <citation type="journal article" date="2014" name="Nature">
        <title>Mitochondrial UPR-regulated innate immunity provides resistance to pathogen infection.</title>
        <authorList>
            <person name="Pellegrino M.W."/>
            <person name="Nargund A.M."/>
            <person name="Kirienko N.V."/>
            <person name="Gillis R."/>
            <person name="Fiorese C.J."/>
            <person name="Haynes C.M."/>
        </authorList>
    </citation>
    <scope>FUNCTION</scope>
    <scope>SUBCELLULAR LOCATION</scope>
    <scope>TISSUE SPECIFICITY</scope>
    <scope>DISRUPTION PHENOTYPE</scope>
    <scope>NUCLEAR LOCALIZATION SIGNAL</scope>
    <scope>MUTAGENESIS OF 436-ARG--LYS-441</scope>
</reference>
<reference evidence="10" key="4">
    <citation type="journal article" date="2015" name="Mol. Cell">
        <title>Mitochondrial and nuclear accumulation of the transcription factor ATFS-1 promotes OXPHOS recovery during the UPR(mt).</title>
        <authorList>
            <person name="Nargund A.M."/>
            <person name="Fiorese C.J."/>
            <person name="Pellegrino M.W."/>
            <person name="Deng P."/>
            <person name="Haynes C.M."/>
        </authorList>
    </citation>
    <scope>FUNCTION</scope>
    <scope>INDUCTION (ISOFORM B)</scope>
    <scope>NUCLEAR LOCALIZATION SIGNAL</scope>
    <scope>MUTAGENESIS OF ARG-4 AND 436-ARG--LYS-441</scope>
</reference>
<reference evidence="10" key="5">
    <citation type="journal article" date="2016" name="Nature">
        <title>Maintenance and propagation of a deleterious mitochondrial genome by the mitochondrial unfolded protein response.</title>
        <authorList>
            <person name="Lin Y.F."/>
            <person name="Schulz A.M."/>
            <person name="Pellegrino M.W."/>
            <person name="Lu Y."/>
            <person name="Shaham S."/>
            <person name="Haynes C.M."/>
        </authorList>
    </citation>
    <scope>FUNCTION</scope>
    <scope>DISRUPTION PHENOTYPE</scope>
    <scope>MUTAGENESIS OF ARG-4</scope>
</reference>
<reference evidence="10" key="6">
    <citation type="journal article" date="2016" name="PLoS ONE">
        <title>The mitochondrial unfolded protein response protects against anoxia in Caenorhabditis elegans.</title>
        <authorList>
            <person name="Pena S."/>
            <person name="Sherman T."/>
            <person name="Brookes P.S."/>
            <person name="Nehrke K."/>
        </authorList>
    </citation>
    <scope>DISRUPTION PHENOTYPE</scope>
    <scope>MUTAGENESIS OF GLY-6</scope>
</reference>
<reference key="7">
    <citation type="journal article" date="2019" name="Elife">
        <title>SUMO peptidase ULP-4 regulates mitochondrial UPR-mediated innate immunity and lifespan extension.</title>
        <authorList>
            <person name="Gao K."/>
            <person name="Li Y."/>
            <person name="Hu S."/>
            <person name="Liu Y."/>
        </authorList>
    </citation>
    <scope>FUNCTION</scope>
    <scope>SUBCELLULAR LOCATION</scope>
    <scope>SUMOYLATION AT 342</scope>
    <scope>MUTAGENESIS OF LYS-342</scope>
</reference>
<reference key="8">
    <citation type="journal article" date="2020" name="Elife">
        <title>A feedback loop governs the relationship between lipid metabolism and longevity.</title>
        <authorList>
            <person name="Littlejohn N.K."/>
            <person name="Seban N."/>
            <person name="Liu C.C."/>
            <person name="Srinivasan S."/>
        </authorList>
    </citation>
    <scope>FUNCTION</scope>
    <scope>DISRUPTION PHENOTYPE</scope>
</reference>
<gene>
    <name evidence="16" type="primary">atfs-1</name>
    <name evidence="16" type="ORF">ZC376.7</name>
</gene>
<comment type="function">
    <text evidence="3 4 5 6 8 9">Acts as a transcription factor during mitochondrial stress by activating the mitochondrial unfolded protein response (mtUPR) (PubMed:22700657, PubMed:25274306, PubMed:25773600, PubMed:30642431). Induces nuclear and mitochondrial gene transcription, including genes coding for mitochondrial chaperones and proteins involved in glycolysis, amino acid catabolism and innate immunity (PubMed:22700657, PubMed:25274306, PubMed:25773600). Following mitochondrial stress, restores mitochondrial respiratory capacity by limiting the transcription of oxidative phosphorylation (OXPHOS) machinery genes and by promoting the assembly of OXPHOS complexes via the up-regulation of chaperone and assembly factor genes (PubMed:25773600). Component of a feedback loop involving atfs-1, atgl-1 and hlh-11 (PubMed:33078707). Acts together with flp-7 to negatively regulate the expression of the transcription regulator hlh-11, to promote expression of atgl-1, and thus atgl-1-dependent fat oxidation in response to mitochondrial stress (PubMed:33078707). In addition, functions with hlh-11 to maintain lifespan (PubMed:33078707). Promotes mtDNA maintenance and propagation of deleterious mtDNA (PubMed:27135930).</text>
</comment>
<comment type="interaction">
    <interactant intactId="EBI-6748337">
        <id>Q23272</id>
    </interactant>
    <interactant intactId="EBI-2914231">
        <id>Q8IG69</id>
        <label>cebp-2</label>
    </interactant>
    <organismsDiffer>false</organismsDiffer>
    <experiments>2</experiments>
</comment>
<comment type="subcellular location">
    <subcellularLocation>
        <location evidence="3">Mitochondrion matrix</location>
    </subcellularLocation>
    <subcellularLocation>
        <location evidence="3">Cytoplasm</location>
    </subcellularLocation>
    <subcellularLocation>
        <location evidence="3 4 8">Nucleus</location>
    </subcellularLocation>
    <text evidence="3 4">In absence of mitochondrial stress, localizes mainly to mitochondria where it is rapidly degraded by protease lonp-1 (PubMed:22700657). Upon mitochondrial stress which causes a reduction in protein mitochondrial import, accumulates in the cytoplasm and translocates into the nucleus to activate transcription of mitochondrial unfolded protein response genes (PubMed:22700657). Similarly, accumulates in the nucleus in response to P.aeruginosa-mediated infection (PubMed:25274306).</text>
</comment>
<comment type="alternative products">
    <event type="alternative splicing"/>
    <isoform>
        <id>Q23272-1</id>
        <name evidence="16">a</name>
        <sequence type="displayed"/>
    </isoform>
    <isoform>
        <id>Q23272-2</id>
        <name evidence="17">b</name>
        <sequence type="described" ref="VSP_059254"/>
    </isoform>
    <isoform>
        <id>Q23272-3</id>
        <name evidence="18">c</name>
        <sequence type="described" ref="VSP_059254 VSP_059255"/>
    </isoform>
    <isoform>
        <id>Q23272-4</id>
        <name evidence="19">d</name>
        <sequence type="described" ref="VSP_059253"/>
    </isoform>
</comment>
<comment type="tissue specificity">
    <text evidence="3 4">Ubiquitously expressed.</text>
</comment>
<comment type="induction">
    <molecule>Isoform b</molecule>
    <text evidence="5">Induced by mitochondrial stress.</text>
</comment>
<comment type="PTM">
    <text evidence="14">May be desumoylated by ulp-4.</text>
</comment>
<comment type="disruption phenotype">
    <text evidence="3 4 5 6 7 9">Prevents the up-regulation of several innate immune genes following P.aeruginosa-mediated infection (PubMed:25274306). RNAi-mediated knockdown causes a reduction in survival following P.aeruginosa-mediated infection (PubMed:25274306). Prevents the up-regulation of mitochondrial protective genes and increases the transcription of oxidative phosphorylation machinery and tricarboxylic acid cycle genes following mitochondrial stress caused by RNAi-mediated knockdown of protease spg-7 (PubMed:22700657, PubMed:25773600). Assembly of complex I and ATP synthase of the oxidative phosphorylation machinery and oxygen consumption are reduced in a spg-7 RNAi-mediated background (PubMed:25773600). RNAi-mediated knockdown reduces the levels of deleterious mtDNA that occurs in aging cells (PubMed:27135930). Protection from death following anoxia-reperfusion is lost in a spg-7 RNAi-mediated background (PubMed:27459203). RNAi-mediated knockdown does not alter atgl-1 expression (PubMed:33078707). However, RNAi-mediated knockdown increases atgl-1 expression in a hlh-11 ok2944 mutant background (PubMed:33078707). RNAi-mediated knockdown reduces the induction of hsp-60, an indicator of mitochondrial stress following overexpression of flp-7 (PubMed:33078707).</text>
</comment>
<comment type="similarity">
    <text evidence="10">Belongs to the bZIP family.</text>
</comment>
<protein>
    <recommendedName>
        <fullName evidence="10">Stress activated transcription factor atfs-1</fullName>
    </recommendedName>
</protein>
<dbReference type="EMBL" id="BX284605">
    <property type="protein sequence ID" value="CAB00883.1"/>
    <property type="molecule type" value="Genomic_DNA"/>
</dbReference>
<dbReference type="EMBL" id="BX284605">
    <property type="protein sequence ID" value="CAD54177.1"/>
    <property type="molecule type" value="Genomic_DNA"/>
</dbReference>
<dbReference type="EMBL" id="BX284605">
    <property type="protein sequence ID" value="CAI91180.1"/>
    <property type="molecule type" value="Genomic_DNA"/>
</dbReference>
<dbReference type="EMBL" id="BX284605">
    <property type="protein sequence ID" value="CBY25213.1"/>
    <property type="molecule type" value="Genomic_DNA"/>
</dbReference>
<dbReference type="PIR" id="T27532">
    <property type="entry name" value="T27532"/>
</dbReference>
<dbReference type="RefSeq" id="NP_001024302.1">
    <molecule id="Q23272-3"/>
    <property type="nucleotide sequence ID" value="NM_001029131.6"/>
</dbReference>
<dbReference type="RefSeq" id="NP_001256571.1">
    <molecule id="Q23272-4"/>
    <property type="nucleotide sequence ID" value="NM_001269642.3"/>
</dbReference>
<dbReference type="RefSeq" id="NP_506515.1">
    <molecule id="Q23272-1"/>
    <property type="nucleotide sequence ID" value="NM_074114.7"/>
</dbReference>
<dbReference type="RefSeq" id="NP_872160.1">
    <molecule id="Q23272-2"/>
    <property type="nucleotide sequence ID" value="NM_182360.9"/>
</dbReference>
<dbReference type="SMR" id="Q23272"/>
<dbReference type="FunCoup" id="Q23272">
    <property type="interactions" value="327"/>
</dbReference>
<dbReference type="IntAct" id="Q23272">
    <property type="interactions" value="3"/>
</dbReference>
<dbReference type="MINT" id="Q23272"/>
<dbReference type="STRING" id="6239.ZC376.7a.2"/>
<dbReference type="PaxDb" id="6239-ZC376.7a.2"/>
<dbReference type="EnsemblMetazoa" id="ZC376.7a.1">
    <molecule id="Q23272-1"/>
    <property type="protein sequence ID" value="ZC376.7a.1"/>
    <property type="gene ID" value="WBGene00013878"/>
</dbReference>
<dbReference type="EnsemblMetazoa" id="ZC376.7a.2">
    <molecule id="Q23272-1"/>
    <property type="protein sequence ID" value="ZC376.7a.2"/>
    <property type="gene ID" value="WBGene00013878"/>
</dbReference>
<dbReference type="EnsemblMetazoa" id="ZC376.7b.1">
    <molecule id="Q23272-2"/>
    <property type="protein sequence ID" value="ZC376.7b.1"/>
    <property type="gene ID" value="WBGene00013878"/>
</dbReference>
<dbReference type="EnsemblMetazoa" id="ZC376.7b.2">
    <molecule id="Q23272-2"/>
    <property type="protein sequence ID" value="ZC376.7b.2"/>
    <property type="gene ID" value="WBGene00013878"/>
</dbReference>
<dbReference type="EnsemblMetazoa" id="ZC376.7c.1">
    <molecule id="Q23272-3"/>
    <property type="protein sequence ID" value="ZC376.7c.1"/>
    <property type="gene ID" value="WBGene00013878"/>
</dbReference>
<dbReference type="EnsemblMetazoa" id="ZC376.7c.2">
    <molecule id="Q23272-3"/>
    <property type="protein sequence ID" value="ZC376.7c.2"/>
    <property type="gene ID" value="WBGene00013878"/>
</dbReference>
<dbReference type="EnsemblMetazoa" id="ZC376.7d.1">
    <molecule id="Q23272-4"/>
    <property type="protein sequence ID" value="ZC376.7d.1"/>
    <property type="gene ID" value="WBGene00013878"/>
</dbReference>
<dbReference type="GeneID" id="179922"/>
<dbReference type="KEGG" id="cel:CELE_ZC376.7"/>
<dbReference type="UCSC" id="ZC376.7a.1">
    <property type="organism name" value="c. elegans"/>
</dbReference>
<dbReference type="AGR" id="WB:WBGene00013878"/>
<dbReference type="CTD" id="179922"/>
<dbReference type="WormBase" id="ZC376.7a">
    <molecule id="Q23272-1"/>
    <property type="protein sequence ID" value="CE15205"/>
    <property type="gene ID" value="WBGene00013878"/>
    <property type="gene designation" value="atfs-1"/>
</dbReference>
<dbReference type="WormBase" id="ZC376.7b">
    <molecule id="Q23272-2"/>
    <property type="protein sequence ID" value="CE32033"/>
    <property type="gene ID" value="WBGene00013878"/>
    <property type="gene designation" value="atfs-1"/>
</dbReference>
<dbReference type="WormBase" id="ZC376.7c">
    <molecule id="Q23272-3"/>
    <property type="protein sequence ID" value="CE38576"/>
    <property type="gene ID" value="WBGene00013878"/>
    <property type="gene designation" value="atfs-1"/>
</dbReference>
<dbReference type="WormBase" id="ZC376.7d">
    <molecule id="Q23272-4"/>
    <property type="protein sequence ID" value="CE45623"/>
    <property type="gene ID" value="WBGene00013878"/>
    <property type="gene designation" value="atfs-1"/>
</dbReference>
<dbReference type="eggNOG" id="ENOG502TGC0">
    <property type="taxonomic scope" value="Eukaryota"/>
</dbReference>
<dbReference type="GeneTree" id="ENSGT00530000063801"/>
<dbReference type="HOGENOM" id="CLU_571396_0_0_1"/>
<dbReference type="InParanoid" id="Q23272"/>
<dbReference type="OMA" id="WNHYLES"/>
<dbReference type="OrthoDB" id="5846045at2759"/>
<dbReference type="PRO" id="PR:Q23272"/>
<dbReference type="Proteomes" id="UP000001940">
    <property type="component" value="Chromosome V"/>
</dbReference>
<dbReference type="Bgee" id="WBGene00013878">
    <property type="expression patterns" value="Expressed in pharyngeal muscle cell (C elegans) and 4 other cell types or tissues"/>
</dbReference>
<dbReference type="GO" id="GO:0005737">
    <property type="term" value="C:cytoplasm"/>
    <property type="evidence" value="ECO:0007005"/>
    <property type="project" value="WormBase"/>
</dbReference>
<dbReference type="GO" id="GO:0005829">
    <property type="term" value="C:cytosol"/>
    <property type="evidence" value="ECO:0000304"/>
    <property type="project" value="Reactome"/>
</dbReference>
<dbReference type="GO" id="GO:0005759">
    <property type="term" value="C:mitochondrial matrix"/>
    <property type="evidence" value="ECO:0000315"/>
    <property type="project" value="UniProtKB"/>
</dbReference>
<dbReference type="GO" id="GO:0005654">
    <property type="term" value="C:nucleoplasm"/>
    <property type="evidence" value="ECO:0000304"/>
    <property type="project" value="Reactome"/>
</dbReference>
<dbReference type="GO" id="GO:0005634">
    <property type="term" value="C:nucleus"/>
    <property type="evidence" value="ECO:0000314"/>
    <property type="project" value="WormBase"/>
</dbReference>
<dbReference type="GO" id="GO:0001228">
    <property type="term" value="F:DNA-binding transcription activator activity, RNA polymerase II-specific"/>
    <property type="evidence" value="ECO:0000318"/>
    <property type="project" value="GO_Central"/>
</dbReference>
<dbReference type="GO" id="GO:0003700">
    <property type="term" value="F:DNA-binding transcription factor activity"/>
    <property type="evidence" value="ECO:0000250"/>
    <property type="project" value="WormBase"/>
</dbReference>
<dbReference type="GO" id="GO:0000981">
    <property type="term" value="F:DNA-binding transcription factor activity, RNA polymerase II-specific"/>
    <property type="evidence" value="ECO:0000315"/>
    <property type="project" value="UniProtKB"/>
</dbReference>
<dbReference type="GO" id="GO:0019899">
    <property type="term" value="F:enzyme binding"/>
    <property type="evidence" value="ECO:0000353"/>
    <property type="project" value="UniProtKB"/>
</dbReference>
<dbReference type="GO" id="GO:0034246">
    <property type="term" value="F:mitochondrial transcription factor activity"/>
    <property type="evidence" value="ECO:0000315"/>
    <property type="project" value="UniProtKB"/>
</dbReference>
<dbReference type="GO" id="GO:0000977">
    <property type="term" value="F:RNA polymerase II transcription regulatory region sequence-specific DNA binding"/>
    <property type="evidence" value="ECO:0000318"/>
    <property type="project" value="GO_Central"/>
</dbReference>
<dbReference type="GO" id="GO:0050829">
    <property type="term" value="P:defense response to Gram-negative bacterium"/>
    <property type="evidence" value="ECO:0000315"/>
    <property type="project" value="UniProtKB"/>
</dbReference>
<dbReference type="GO" id="GO:0045087">
    <property type="term" value="P:innate immune response"/>
    <property type="evidence" value="ECO:0007669"/>
    <property type="project" value="UniProtKB-KW"/>
</dbReference>
<dbReference type="GO" id="GO:0034514">
    <property type="term" value="P:mitochondrial unfolded protein response"/>
    <property type="evidence" value="ECO:0000315"/>
    <property type="project" value="UniProtKB"/>
</dbReference>
<dbReference type="GO" id="GO:0010628">
    <property type="term" value="P:positive regulation of gene expression"/>
    <property type="evidence" value="ECO:0000315"/>
    <property type="project" value="UniProtKB"/>
</dbReference>
<dbReference type="GO" id="GO:0061063">
    <property type="term" value="P:positive regulation of nematode larval development"/>
    <property type="evidence" value="ECO:0000316"/>
    <property type="project" value="UniProtKB"/>
</dbReference>
<dbReference type="GO" id="GO:0010468">
    <property type="term" value="P:regulation of gene expression"/>
    <property type="evidence" value="ECO:0000315"/>
    <property type="project" value="UniProtKB"/>
</dbReference>
<dbReference type="GO" id="GO:1903108">
    <property type="term" value="P:regulation of mitochondrial transcription"/>
    <property type="evidence" value="ECO:0000315"/>
    <property type="project" value="UniProtKB"/>
</dbReference>
<dbReference type="GO" id="GO:0006357">
    <property type="term" value="P:regulation of transcription by RNA polymerase II"/>
    <property type="evidence" value="ECO:0000315"/>
    <property type="project" value="UniProtKB"/>
</dbReference>
<dbReference type="CDD" id="cd14692">
    <property type="entry name" value="bZIP_ATF4"/>
    <property type="match status" value="1"/>
</dbReference>
<dbReference type="CDD" id="cd09726">
    <property type="entry name" value="RAMP_I_III"/>
    <property type="match status" value="1"/>
</dbReference>
<dbReference type="Gene3D" id="1.20.5.170">
    <property type="match status" value="1"/>
</dbReference>
<dbReference type="InterPro" id="IPR004827">
    <property type="entry name" value="bZIP"/>
</dbReference>
<dbReference type="PANTHER" id="PTHR13044">
    <property type="entry name" value="ACTIVATING TRANSCRIPTION FACTOR ATF 4/5"/>
    <property type="match status" value="1"/>
</dbReference>
<dbReference type="PANTHER" id="PTHR13044:SF12">
    <property type="entry name" value="STRESS ACTIVATED TRANSCRIPTION FACTOR ATFS-1"/>
    <property type="match status" value="1"/>
</dbReference>
<dbReference type="Pfam" id="PF07716">
    <property type="entry name" value="bZIP_2"/>
    <property type="match status" value="1"/>
</dbReference>
<dbReference type="SMART" id="SM00338">
    <property type="entry name" value="BRLZ"/>
    <property type="match status" value="1"/>
</dbReference>
<dbReference type="PROSITE" id="PS50217">
    <property type="entry name" value="BZIP"/>
    <property type="match status" value="1"/>
</dbReference>
<accession>Q23272</accession>
<accession>E5QCH2</accession>
<accession>Q52GY6</accession>
<accession>Q8I4B7</accession>
<evidence type="ECO:0000255" key="1">
    <source>
        <dbReference type="PROSITE-ProRule" id="PRU00978"/>
    </source>
</evidence>
<evidence type="ECO:0000256" key="2">
    <source>
        <dbReference type="SAM" id="MobiDB-lite"/>
    </source>
</evidence>
<evidence type="ECO:0000269" key="3">
    <source>
    </source>
</evidence>
<evidence type="ECO:0000269" key="4">
    <source>
    </source>
</evidence>
<evidence type="ECO:0000269" key="5">
    <source>
    </source>
</evidence>
<evidence type="ECO:0000269" key="6">
    <source>
    </source>
</evidence>
<evidence type="ECO:0000269" key="7">
    <source>
    </source>
</evidence>
<evidence type="ECO:0000269" key="8">
    <source>
    </source>
</evidence>
<evidence type="ECO:0000269" key="9">
    <source>
    </source>
</evidence>
<evidence type="ECO:0000305" key="10"/>
<evidence type="ECO:0000305" key="11">
    <source>
    </source>
</evidence>
<evidence type="ECO:0000305" key="12">
    <source>
    </source>
</evidence>
<evidence type="ECO:0000305" key="13">
    <source>
    </source>
</evidence>
<evidence type="ECO:0000305" key="14">
    <source>
    </source>
</evidence>
<evidence type="ECO:0000312" key="15">
    <source>
        <dbReference type="Proteomes" id="UP000001940"/>
    </source>
</evidence>
<evidence type="ECO:0000312" key="16">
    <source>
        <dbReference type="WormBase" id="ZC376.7a"/>
    </source>
</evidence>
<evidence type="ECO:0000312" key="17">
    <source>
        <dbReference type="WormBase" id="ZC376.7b"/>
    </source>
</evidence>
<evidence type="ECO:0000312" key="18">
    <source>
        <dbReference type="WormBase" id="ZC376.7c"/>
    </source>
</evidence>
<evidence type="ECO:0000312" key="19">
    <source>
        <dbReference type="WormBase" id="ZC376.7d"/>
    </source>
</evidence>
<feature type="transit peptide" description="Mitochondrion" evidence="11 13">
    <location>
        <begin position="1"/>
        <end position="23"/>
    </location>
</feature>
<feature type="chain" id="PRO_0000442516" description="Stress activated transcription factor atfs-1">
    <location>
        <begin position="24"/>
        <end position="488"/>
    </location>
</feature>
<feature type="domain" description="bZIP" evidence="1">
    <location>
        <begin position="420"/>
        <end position="483"/>
    </location>
</feature>
<feature type="region of interest" description="Disordered" evidence="2">
    <location>
        <begin position="138"/>
        <end position="191"/>
    </location>
</feature>
<feature type="region of interest" description="Disordered" evidence="2">
    <location>
        <begin position="353"/>
        <end position="400"/>
    </location>
</feature>
<feature type="region of interest" description="Basic motif" evidence="1">
    <location>
        <begin position="425"/>
        <end position="460"/>
    </location>
</feature>
<feature type="region of interest" description="Leucine-zipper" evidence="1">
    <location>
        <begin position="462"/>
        <end position="469"/>
    </location>
</feature>
<feature type="short sequence motif" description="Nuclear localization signal" evidence="11 12 13">
    <location>
        <begin position="436"/>
        <end position="441"/>
    </location>
</feature>
<feature type="compositionally biased region" description="Low complexity" evidence="2">
    <location>
        <begin position="142"/>
        <end position="168"/>
    </location>
</feature>
<feature type="cross-link" description="Glycyl lysine isopeptide (Lys-Gly) (interchain with G-Cter in smo-1)" evidence="8">
    <location>
        <position position="342"/>
    </location>
</feature>
<feature type="splice variant" id="VSP_059253" description="In isoform d." evidence="10">
    <location>
        <begin position="1"/>
        <end position="207"/>
    </location>
</feature>
<feature type="splice variant" id="VSP_059254" description="In isoform b and isoform c." evidence="10">
    <location>
        <begin position="114"/>
        <end position="129"/>
    </location>
</feature>
<feature type="splice variant" id="VSP_059255" description="In isoform c." evidence="10">
    <original>E</original>
    <variation>EFQ</variation>
    <location>
        <position position="205"/>
    </location>
</feature>
<feature type="mutagenesis site" description="In et18; reduces its mitochondrial import, constitutively activates the mitochondrial unfolded protein response and up-regulates transcription of several innate immune response genes. Increases resistance to P.aeruginosa-mediated infection. Reduces the levels of deleterious mtDNA." evidence="4 6">
    <original>R</original>
    <variation>C</variation>
    <location>
        <position position="4"/>
    </location>
</feature>
<feature type="mutagenesis site" description="In et15; probably reduces its mitochondrial import. Constitutively activates the mitochondrial unfolded protein response. Reduced axonal degeneration and death following anoxia-reperfusion." evidence="7">
    <original>G</original>
    <variation>E</variation>
    <location>
        <position position="6"/>
    </location>
</feature>
<feature type="mutagenesis site" description="Abolishes sumoylation. Does not affect nuclear localization during mitochondrial stress. Enhances transcriptional activity." evidence="8">
    <original>K</original>
    <variation>R</variation>
    <location>
        <position position="342"/>
    </location>
</feature>
<feature type="mutagenesis site" description="Loss of nuclear import. Prevents up-regulation of hsp-60 in response to P.aeruginosa-mediated infection. Assembly of complex I and ATP synthase and oxygen consumption are reduced in a spg-7 RNAi-mediated knockdown background." evidence="3 4 5">
    <original>RYREKK</original>
    <variation>AYREAA</variation>
    <location>
        <begin position="436"/>
        <end position="441"/>
    </location>
</feature>
<organism evidence="15">
    <name type="scientific">Caenorhabditis elegans</name>
    <dbReference type="NCBI Taxonomy" id="6239"/>
    <lineage>
        <taxon>Eukaryota</taxon>
        <taxon>Metazoa</taxon>
        <taxon>Ecdysozoa</taxon>
        <taxon>Nematoda</taxon>
        <taxon>Chromadorea</taxon>
        <taxon>Rhabditida</taxon>
        <taxon>Rhabditina</taxon>
        <taxon>Rhabditomorpha</taxon>
        <taxon>Rhabditoidea</taxon>
        <taxon>Rhabditidae</taxon>
        <taxon>Peloderinae</taxon>
        <taxon>Caenorhabditis</taxon>
    </lineage>
</organism>